<evidence type="ECO:0000255" key="1">
    <source>
        <dbReference type="HAMAP-Rule" id="MF_00059"/>
    </source>
</evidence>
<keyword id="KW-0240">DNA-directed RNA polymerase</keyword>
<keyword id="KW-0548">Nucleotidyltransferase</keyword>
<keyword id="KW-0804">Transcription</keyword>
<keyword id="KW-0808">Transferase</keyword>
<gene>
    <name evidence="1" type="primary">rpoA</name>
    <name type="ordered locus">A1C_04985</name>
</gene>
<proteinExistence type="inferred from homology"/>
<protein>
    <recommendedName>
        <fullName evidence="1">DNA-directed RNA polymerase subunit alpha</fullName>
        <shortName evidence="1">RNAP subunit alpha</shortName>
        <ecNumber evidence="1">2.7.7.6</ecNumber>
    </recommendedName>
    <alternativeName>
        <fullName evidence="1">RNA polymerase subunit alpha</fullName>
    </alternativeName>
    <alternativeName>
        <fullName evidence="1">Transcriptase subunit alpha</fullName>
    </alternativeName>
</protein>
<sequence>MLSLSKNWNTLIKPNRVAYENFPEINNKAKIVVEPLERGFGLTLGNAMRRVLLSSLQGAAITSIKIPAIEHEFSSIPGVKEDVSEVILNIKGVELKMHVAEKRIMKLKATGPCVVTAGMIETGHDVEILNPDHIICNLAKNKQLEMALTCKVGKGYVLSTNSYEDDLPIGEIAIDALFNPVKSVTYKVENTRVGQVTDYDKLIMFVETNGGLLPEMAVGLAARILQEQLQLFISFEEHEEDKQVKTDTLPFSPYLLKRVDELELSVRSANCLKNDNIIYIGDLVKRTESDMLRTPNFGRKSLNEIKEILAKFNLRFGMDVPDWPPENIQELSKRYEDSYN</sequence>
<feature type="chain" id="PRO_1000007691" description="DNA-directed RNA polymerase subunit alpha">
    <location>
        <begin position="1"/>
        <end position="340"/>
    </location>
</feature>
<feature type="region of interest" description="Alpha N-terminal domain (alpha-NTD)" evidence="1">
    <location>
        <begin position="1"/>
        <end position="236"/>
    </location>
</feature>
<feature type="region of interest" description="Alpha C-terminal domain (alpha-CTD)" evidence="1">
    <location>
        <begin position="251"/>
        <end position="340"/>
    </location>
</feature>
<name>RPOA_RICAH</name>
<reference key="1">
    <citation type="submission" date="2007-09" db="EMBL/GenBank/DDBJ databases">
        <title>Complete genome sequence of Rickettsia akari.</title>
        <authorList>
            <person name="Madan A."/>
            <person name="Fahey J."/>
            <person name="Helton E."/>
            <person name="Ketteman M."/>
            <person name="Madan A."/>
            <person name="Rodrigues S."/>
            <person name="Sanchez A."/>
            <person name="Whiting M."/>
            <person name="Dasch G."/>
            <person name="Eremeeva M."/>
        </authorList>
    </citation>
    <scope>NUCLEOTIDE SEQUENCE [LARGE SCALE GENOMIC DNA]</scope>
    <source>
        <strain>Hartford</strain>
    </source>
</reference>
<organism>
    <name type="scientific">Rickettsia akari (strain Hartford)</name>
    <dbReference type="NCBI Taxonomy" id="293614"/>
    <lineage>
        <taxon>Bacteria</taxon>
        <taxon>Pseudomonadati</taxon>
        <taxon>Pseudomonadota</taxon>
        <taxon>Alphaproteobacteria</taxon>
        <taxon>Rickettsiales</taxon>
        <taxon>Rickettsiaceae</taxon>
        <taxon>Rickettsieae</taxon>
        <taxon>Rickettsia</taxon>
        <taxon>spotted fever group</taxon>
    </lineage>
</organism>
<accession>A8GPC6</accession>
<dbReference type="EC" id="2.7.7.6" evidence="1"/>
<dbReference type="EMBL" id="CP000847">
    <property type="protein sequence ID" value="ABV75251.1"/>
    <property type="molecule type" value="Genomic_DNA"/>
</dbReference>
<dbReference type="RefSeq" id="WP_012149881.1">
    <property type="nucleotide sequence ID" value="NC_009881.1"/>
</dbReference>
<dbReference type="SMR" id="A8GPC6"/>
<dbReference type="STRING" id="293614.A1C_04985"/>
<dbReference type="KEGG" id="rak:A1C_04985"/>
<dbReference type="eggNOG" id="COG0202">
    <property type="taxonomic scope" value="Bacteria"/>
</dbReference>
<dbReference type="HOGENOM" id="CLU_053084_0_0_5"/>
<dbReference type="Proteomes" id="UP000006830">
    <property type="component" value="Chromosome"/>
</dbReference>
<dbReference type="GO" id="GO:0005737">
    <property type="term" value="C:cytoplasm"/>
    <property type="evidence" value="ECO:0007669"/>
    <property type="project" value="UniProtKB-ARBA"/>
</dbReference>
<dbReference type="GO" id="GO:0000428">
    <property type="term" value="C:DNA-directed RNA polymerase complex"/>
    <property type="evidence" value="ECO:0007669"/>
    <property type="project" value="UniProtKB-KW"/>
</dbReference>
<dbReference type="GO" id="GO:0003677">
    <property type="term" value="F:DNA binding"/>
    <property type="evidence" value="ECO:0007669"/>
    <property type="project" value="UniProtKB-UniRule"/>
</dbReference>
<dbReference type="GO" id="GO:0003899">
    <property type="term" value="F:DNA-directed RNA polymerase activity"/>
    <property type="evidence" value="ECO:0007669"/>
    <property type="project" value="UniProtKB-UniRule"/>
</dbReference>
<dbReference type="GO" id="GO:0046983">
    <property type="term" value="F:protein dimerization activity"/>
    <property type="evidence" value="ECO:0007669"/>
    <property type="project" value="InterPro"/>
</dbReference>
<dbReference type="GO" id="GO:0006351">
    <property type="term" value="P:DNA-templated transcription"/>
    <property type="evidence" value="ECO:0007669"/>
    <property type="project" value="UniProtKB-UniRule"/>
</dbReference>
<dbReference type="CDD" id="cd06928">
    <property type="entry name" value="RNAP_alpha_NTD"/>
    <property type="match status" value="1"/>
</dbReference>
<dbReference type="FunFam" id="1.10.150.20:FF:000001">
    <property type="entry name" value="DNA-directed RNA polymerase subunit alpha"/>
    <property type="match status" value="1"/>
</dbReference>
<dbReference type="FunFam" id="2.170.120.12:FF:000001">
    <property type="entry name" value="DNA-directed RNA polymerase subunit alpha"/>
    <property type="match status" value="1"/>
</dbReference>
<dbReference type="Gene3D" id="1.10.150.20">
    <property type="entry name" value="5' to 3' exonuclease, C-terminal subdomain"/>
    <property type="match status" value="1"/>
</dbReference>
<dbReference type="Gene3D" id="2.170.120.12">
    <property type="entry name" value="DNA-directed RNA polymerase, insert domain"/>
    <property type="match status" value="1"/>
</dbReference>
<dbReference type="Gene3D" id="3.30.1360.10">
    <property type="entry name" value="RNA polymerase, RBP11-like subunit"/>
    <property type="match status" value="1"/>
</dbReference>
<dbReference type="HAMAP" id="MF_00059">
    <property type="entry name" value="RNApol_bact_RpoA"/>
    <property type="match status" value="1"/>
</dbReference>
<dbReference type="InterPro" id="IPR011262">
    <property type="entry name" value="DNA-dir_RNA_pol_insert"/>
</dbReference>
<dbReference type="InterPro" id="IPR011263">
    <property type="entry name" value="DNA-dir_RNA_pol_RpoA/D/Rpb3"/>
</dbReference>
<dbReference type="InterPro" id="IPR011773">
    <property type="entry name" value="DNA-dir_RpoA"/>
</dbReference>
<dbReference type="InterPro" id="IPR036603">
    <property type="entry name" value="RBP11-like"/>
</dbReference>
<dbReference type="InterPro" id="IPR011260">
    <property type="entry name" value="RNAP_asu_C"/>
</dbReference>
<dbReference type="InterPro" id="IPR036643">
    <property type="entry name" value="RNApol_insert_sf"/>
</dbReference>
<dbReference type="NCBIfam" id="NF003513">
    <property type="entry name" value="PRK05182.1-2"/>
    <property type="match status" value="1"/>
</dbReference>
<dbReference type="NCBIfam" id="NF003519">
    <property type="entry name" value="PRK05182.2-5"/>
    <property type="match status" value="1"/>
</dbReference>
<dbReference type="NCBIfam" id="TIGR02027">
    <property type="entry name" value="rpoA"/>
    <property type="match status" value="1"/>
</dbReference>
<dbReference type="Pfam" id="PF01000">
    <property type="entry name" value="RNA_pol_A_bac"/>
    <property type="match status" value="1"/>
</dbReference>
<dbReference type="Pfam" id="PF03118">
    <property type="entry name" value="RNA_pol_A_CTD"/>
    <property type="match status" value="1"/>
</dbReference>
<dbReference type="Pfam" id="PF01193">
    <property type="entry name" value="RNA_pol_L"/>
    <property type="match status" value="1"/>
</dbReference>
<dbReference type="SMART" id="SM00662">
    <property type="entry name" value="RPOLD"/>
    <property type="match status" value="1"/>
</dbReference>
<dbReference type="SUPFAM" id="SSF47789">
    <property type="entry name" value="C-terminal domain of RNA polymerase alpha subunit"/>
    <property type="match status" value="1"/>
</dbReference>
<dbReference type="SUPFAM" id="SSF56553">
    <property type="entry name" value="Insert subdomain of RNA polymerase alpha subunit"/>
    <property type="match status" value="1"/>
</dbReference>
<dbReference type="SUPFAM" id="SSF55257">
    <property type="entry name" value="RBP11-like subunits of RNA polymerase"/>
    <property type="match status" value="1"/>
</dbReference>
<comment type="function">
    <text evidence="1">DNA-dependent RNA polymerase catalyzes the transcription of DNA into RNA using the four ribonucleoside triphosphates as substrates.</text>
</comment>
<comment type="catalytic activity">
    <reaction evidence="1">
        <text>RNA(n) + a ribonucleoside 5'-triphosphate = RNA(n+1) + diphosphate</text>
        <dbReference type="Rhea" id="RHEA:21248"/>
        <dbReference type="Rhea" id="RHEA-COMP:14527"/>
        <dbReference type="Rhea" id="RHEA-COMP:17342"/>
        <dbReference type="ChEBI" id="CHEBI:33019"/>
        <dbReference type="ChEBI" id="CHEBI:61557"/>
        <dbReference type="ChEBI" id="CHEBI:140395"/>
        <dbReference type="EC" id="2.7.7.6"/>
    </reaction>
</comment>
<comment type="subunit">
    <text evidence="1">Homodimer. The RNAP catalytic core consists of 2 alpha, 1 beta, 1 beta' and 1 omega subunit. When a sigma factor is associated with the core the holoenzyme is formed, which can initiate transcription.</text>
</comment>
<comment type="domain">
    <text evidence="1">The N-terminal domain is essential for RNAP assembly and basal transcription, whereas the C-terminal domain is involved in interaction with transcriptional regulators and with upstream promoter elements.</text>
</comment>
<comment type="similarity">
    <text evidence="1">Belongs to the RNA polymerase alpha chain family.</text>
</comment>